<gene>
    <name evidence="1" type="primary">apaH</name>
    <name type="ordered locus">PC1_3637</name>
</gene>
<keyword id="KW-0378">Hydrolase</keyword>
<sequence length="281" mass="31227">MSTYLVGDVHGCLVELKALLAQVSFNPEQDTLWLTGDLVARGPDSLQVLRFVRSLGSAVRMVLGNHDLHLLAVYAGISRNKPKDRISDLLTAPDADELINWLRRQPILQVDDDLKLVMAHAGITPQWDLPTAQMCAREVEAILSSDSYPLFLDAMYGDMPNHWSPELSGLARLRFSTNVFTRMRYCFSGGQLDMLCKEPPSQAPSLLKPWFDLPSQVAGEYAIAFGHWASLEGKGTPENIYALDTGCCWGGELTMLRWDDKRYFTQSSLSSNTESSGDIAL</sequence>
<comment type="function">
    <text evidence="1">Hydrolyzes diadenosine 5',5'''-P1,P4-tetraphosphate to yield ADP.</text>
</comment>
<comment type="catalytic activity">
    <reaction evidence="1">
        <text>P(1),P(4)-bis(5'-adenosyl) tetraphosphate + H2O = 2 ADP + 2 H(+)</text>
        <dbReference type="Rhea" id="RHEA:24252"/>
        <dbReference type="ChEBI" id="CHEBI:15377"/>
        <dbReference type="ChEBI" id="CHEBI:15378"/>
        <dbReference type="ChEBI" id="CHEBI:58141"/>
        <dbReference type="ChEBI" id="CHEBI:456216"/>
        <dbReference type="EC" id="3.6.1.41"/>
    </reaction>
</comment>
<comment type="similarity">
    <text evidence="1">Belongs to the Ap4A hydrolase family.</text>
</comment>
<protein>
    <recommendedName>
        <fullName evidence="1">Bis(5'-nucleosyl)-tetraphosphatase, symmetrical</fullName>
        <ecNumber evidence="1">3.6.1.41</ecNumber>
    </recommendedName>
    <alternativeName>
        <fullName evidence="1">Ap4A hydrolase</fullName>
    </alternativeName>
    <alternativeName>
        <fullName evidence="1">Diadenosine 5',5'''-P1,P4-tetraphosphate pyrophosphohydrolase</fullName>
    </alternativeName>
    <alternativeName>
        <fullName evidence="1">Diadenosine tetraphosphatase</fullName>
    </alternativeName>
</protein>
<reference key="1">
    <citation type="submission" date="2009-07" db="EMBL/GenBank/DDBJ databases">
        <title>Complete sequence of Pectobacterium carotovorum subsp. carotovorum PC1.</title>
        <authorList>
            <consortium name="US DOE Joint Genome Institute"/>
            <person name="Lucas S."/>
            <person name="Copeland A."/>
            <person name="Lapidus A."/>
            <person name="Glavina del Rio T."/>
            <person name="Tice H."/>
            <person name="Bruce D."/>
            <person name="Goodwin L."/>
            <person name="Pitluck S."/>
            <person name="Munk A.C."/>
            <person name="Brettin T."/>
            <person name="Detter J.C."/>
            <person name="Han C."/>
            <person name="Tapia R."/>
            <person name="Larimer F."/>
            <person name="Land M."/>
            <person name="Hauser L."/>
            <person name="Kyrpides N."/>
            <person name="Mikhailova N."/>
            <person name="Balakrishnan V."/>
            <person name="Glasner J."/>
            <person name="Perna N.T."/>
        </authorList>
    </citation>
    <scope>NUCLEOTIDE SEQUENCE [LARGE SCALE GENOMIC DNA]</scope>
    <source>
        <strain>PC1</strain>
    </source>
</reference>
<name>APAH_PECCP</name>
<evidence type="ECO:0000255" key="1">
    <source>
        <dbReference type="HAMAP-Rule" id="MF_00199"/>
    </source>
</evidence>
<proteinExistence type="inferred from homology"/>
<accession>C6DEY8</accession>
<dbReference type="EC" id="3.6.1.41" evidence="1"/>
<dbReference type="EMBL" id="CP001657">
    <property type="protein sequence ID" value="ACT14652.1"/>
    <property type="molecule type" value="Genomic_DNA"/>
</dbReference>
<dbReference type="RefSeq" id="WP_015841768.1">
    <property type="nucleotide sequence ID" value="NC_012917.1"/>
</dbReference>
<dbReference type="SMR" id="C6DEY8"/>
<dbReference type="STRING" id="561230.PC1_3637"/>
<dbReference type="GeneID" id="67792554"/>
<dbReference type="KEGG" id="pct:PC1_3637"/>
<dbReference type="eggNOG" id="COG0639">
    <property type="taxonomic scope" value="Bacteria"/>
</dbReference>
<dbReference type="HOGENOM" id="CLU_056184_2_0_6"/>
<dbReference type="OrthoDB" id="9807890at2"/>
<dbReference type="Proteomes" id="UP000002736">
    <property type="component" value="Chromosome"/>
</dbReference>
<dbReference type="GO" id="GO:0008803">
    <property type="term" value="F:bis(5'-nucleosyl)-tetraphosphatase (symmetrical) activity"/>
    <property type="evidence" value="ECO:0007669"/>
    <property type="project" value="UniProtKB-UniRule"/>
</dbReference>
<dbReference type="CDD" id="cd07422">
    <property type="entry name" value="MPP_ApaH"/>
    <property type="match status" value="1"/>
</dbReference>
<dbReference type="FunFam" id="3.60.21.10:FF:000013">
    <property type="entry name" value="Bis(5'-nucleosyl)-tetraphosphatase, symmetrical"/>
    <property type="match status" value="1"/>
</dbReference>
<dbReference type="Gene3D" id="3.60.21.10">
    <property type="match status" value="1"/>
</dbReference>
<dbReference type="HAMAP" id="MF_00199">
    <property type="entry name" value="ApaH"/>
    <property type="match status" value="1"/>
</dbReference>
<dbReference type="InterPro" id="IPR004617">
    <property type="entry name" value="ApaH"/>
</dbReference>
<dbReference type="InterPro" id="IPR004843">
    <property type="entry name" value="Calcineurin-like_PHP_ApaH"/>
</dbReference>
<dbReference type="InterPro" id="IPR029052">
    <property type="entry name" value="Metallo-depent_PP-like"/>
</dbReference>
<dbReference type="NCBIfam" id="TIGR00668">
    <property type="entry name" value="apaH"/>
    <property type="match status" value="1"/>
</dbReference>
<dbReference type="NCBIfam" id="NF001204">
    <property type="entry name" value="PRK00166.1"/>
    <property type="match status" value="1"/>
</dbReference>
<dbReference type="PANTHER" id="PTHR40942">
    <property type="match status" value="1"/>
</dbReference>
<dbReference type="PANTHER" id="PTHR40942:SF4">
    <property type="entry name" value="CYTOCHROME C5"/>
    <property type="match status" value="1"/>
</dbReference>
<dbReference type="Pfam" id="PF00149">
    <property type="entry name" value="Metallophos"/>
    <property type="match status" value="1"/>
</dbReference>
<dbReference type="PIRSF" id="PIRSF000903">
    <property type="entry name" value="B5n-ttraPtase_sm"/>
    <property type="match status" value="1"/>
</dbReference>
<dbReference type="SUPFAM" id="SSF56300">
    <property type="entry name" value="Metallo-dependent phosphatases"/>
    <property type="match status" value="1"/>
</dbReference>
<organism>
    <name type="scientific">Pectobacterium carotovorum subsp. carotovorum (strain PC1)</name>
    <dbReference type="NCBI Taxonomy" id="561230"/>
    <lineage>
        <taxon>Bacteria</taxon>
        <taxon>Pseudomonadati</taxon>
        <taxon>Pseudomonadota</taxon>
        <taxon>Gammaproteobacteria</taxon>
        <taxon>Enterobacterales</taxon>
        <taxon>Pectobacteriaceae</taxon>
        <taxon>Pectobacterium</taxon>
    </lineage>
</organism>
<feature type="chain" id="PRO_1000204087" description="Bis(5'-nucleosyl)-tetraphosphatase, symmetrical">
    <location>
        <begin position="1"/>
        <end position="281"/>
    </location>
</feature>